<keyword id="KW-0002">3D-structure</keyword>
<keyword id="KW-1185">Reference proteome</keyword>
<keyword id="KW-0687">Ribonucleoprotein</keyword>
<keyword id="KW-0689">Ribosomal protein</keyword>
<dbReference type="EMBL" id="AE014298">
    <property type="protein sequence ID" value="AAF46503.2"/>
    <property type="molecule type" value="Genomic_DNA"/>
</dbReference>
<dbReference type="EMBL" id="AY061320">
    <property type="protein sequence ID" value="AAL28868.1"/>
    <property type="molecule type" value="mRNA"/>
</dbReference>
<dbReference type="RefSeq" id="NP_001285059.1">
    <property type="nucleotide sequence ID" value="NM_001298130.1"/>
</dbReference>
<dbReference type="RefSeq" id="NP_572568.1">
    <property type="nucleotide sequence ID" value="NM_132340.4"/>
</dbReference>
<dbReference type="PDB" id="4V6W">
    <property type="method" value="EM"/>
    <property type="resolution" value="6.00 A"/>
    <property type="chains" value="Ac=1-65"/>
</dbReference>
<dbReference type="PDB" id="6XU6">
    <property type="method" value="EM"/>
    <property type="resolution" value="3.50 A"/>
    <property type="chains" value="Ac=4-65"/>
</dbReference>
<dbReference type="PDB" id="6XU7">
    <property type="method" value="EM"/>
    <property type="resolution" value="4.90 A"/>
    <property type="chains" value="Ac=4-65"/>
</dbReference>
<dbReference type="PDB" id="6XU8">
    <property type="method" value="EM"/>
    <property type="resolution" value="3.00 A"/>
    <property type="chains" value="Ac=4-65"/>
</dbReference>
<dbReference type="PDBsum" id="4V6W"/>
<dbReference type="PDBsum" id="6XU6"/>
<dbReference type="PDBsum" id="6XU7"/>
<dbReference type="PDBsum" id="6XU8"/>
<dbReference type="EMDB" id="EMD-10622"/>
<dbReference type="EMDB" id="EMD-10623"/>
<dbReference type="EMDB" id="EMD-10624"/>
<dbReference type="SMR" id="Q9W334"/>
<dbReference type="BioGRID" id="58339">
    <property type="interactions" value="111"/>
</dbReference>
<dbReference type="FunCoup" id="Q9W334">
    <property type="interactions" value="1027"/>
</dbReference>
<dbReference type="IntAct" id="Q9W334">
    <property type="interactions" value="3"/>
</dbReference>
<dbReference type="STRING" id="7227.FBpp0310057"/>
<dbReference type="PaxDb" id="7227-FBpp0071295"/>
<dbReference type="DNASU" id="31897"/>
<dbReference type="EnsemblMetazoa" id="FBtr0071360">
    <property type="protein sequence ID" value="FBpp0071295"/>
    <property type="gene ID" value="FBgn0030136"/>
</dbReference>
<dbReference type="EnsemblMetazoa" id="FBtr0343411">
    <property type="protein sequence ID" value="FBpp0310057"/>
    <property type="gene ID" value="FBgn0030136"/>
</dbReference>
<dbReference type="GeneID" id="31897"/>
<dbReference type="KEGG" id="dme:Dmel_CG2998"/>
<dbReference type="AGR" id="FB:FBgn0030136"/>
<dbReference type="CTD" id="31897"/>
<dbReference type="FlyBase" id="FBgn0030136">
    <property type="gene designation" value="RpS28b"/>
</dbReference>
<dbReference type="VEuPathDB" id="VectorBase:FBgn0030136"/>
<dbReference type="eggNOG" id="KOG3502">
    <property type="taxonomic scope" value="Eukaryota"/>
</dbReference>
<dbReference type="HOGENOM" id="CLU_178987_1_0_1"/>
<dbReference type="InParanoid" id="Q9W334"/>
<dbReference type="OMA" id="SCSIIHN"/>
<dbReference type="OrthoDB" id="10258930at2759"/>
<dbReference type="PhylomeDB" id="Q9W334"/>
<dbReference type="Reactome" id="R-DME-156827">
    <property type="pathway name" value="L13a-mediated translational silencing of Ceruloplasmin expression"/>
</dbReference>
<dbReference type="Reactome" id="R-DME-1799339">
    <property type="pathway name" value="SRP-dependent cotranslational protein targeting to membrane"/>
</dbReference>
<dbReference type="Reactome" id="R-DME-72649">
    <property type="pathway name" value="Translation initiation complex formation"/>
</dbReference>
<dbReference type="Reactome" id="R-DME-72689">
    <property type="pathway name" value="Formation of a pool of free 40S subunits"/>
</dbReference>
<dbReference type="Reactome" id="R-DME-72695">
    <property type="pathway name" value="Formation of the ternary complex, and subsequently, the 43S complex"/>
</dbReference>
<dbReference type="Reactome" id="R-DME-72702">
    <property type="pathway name" value="Ribosomal scanning and start codon recognition"/>
</dbReference>
<dbReference type="Reactome" id="R-DME-72706">
    <property type="pathway name" value="GTP hydrolysis and joining of the 60S ribosomal subunit"/>
</dbReference>
<dbReference type="Reactome" id="R-DME-975956">
    <property type="pathway name" value="Nonsense Mediated Decay (NMD) independent of the Exon Junction Complex (EJC)"/>
</dbReference>
<dbReference type="Reactome" id="R-DME-975957">
    <property type="pathway name" value="Nonsense Mediated Decay (NMD) enhanced by the Exon Junction Complex (EJC)"/>
</dbReference>
<dbReference type="SignaLink" id="Q9W334"/>
<dbReference type="BioGRID-ORCS" id="31897">
    <property type="hits" value="1 hit in 1 CRISPR screen"/>
</dbReference>
<dbReference type="ChiTaRS" id="RpS28b">
    <property type="organism name" value="fly"/>
</dbReference>
<dbReference type="GenomeRNAi" id="31897"/>
<dbReference type="PRO" id="PR:Q9W334"/>
<dbReference type="Proteomes" id="UP000000803">
    <property type="component" value="Chromosome X"/>
</dbReference>
<dbReference type="Bgee" id="FBgn0030136">
    <property type="expression patterns" value="Expressed in egg cell and 293 other cell types or tissues"/>
</dbReference>
<dbReference type="ExpressionAtlas" id="Q9W334">
    <property type="expression patterns" value="baseline and differential"/>
</dbReference>
<dbReference type="GO" id="GO:0022626">
    <property type="term" value="C:cytosolic ribosome"/>
    <property type="evidence" value="ECO:0000314"/>
    <property type="project" value="FlyBase"/>
</dbReference>
<dbReference type="GO" id="GO:0022627">
    <property type="term" value="C:cytosolic small ribosomal subunit"/>
    <property type="evidence" value="ECO:0000250"/>
    <property type="project" value="FlyBase"/>
</dbReference>
<dbReference type="GO" id="GO:0003735">
    <property type="term" value="F:structural constituent of ribosome"/>
    <property type="evidence" value="ECO:0000314"/>
    <property type="project" value="FlyBase"/>
</dbReference>
<dbReference type="GO" id="GO:0002181">
    <property type="term" value="P:cytoplasmic translation"/>
    <property type="evidence" value="ECO:0000304"/>
    <property type="project" value="FlyBase"/>
</dbReference>
<dbReference type="GO" id="GO:0030490">
    <property type="term" value="P:maturation of SSU-rRNA"/>
    <property type="evidence" value="ECO:0000318"/>
    <property type="project" value="GO_Central"/>
</dbReference>
<dbReference type="GO" id="GO:0000028">
    <property type="term" value="P:ribosomal small subunit assembly"/>
    <property type="evidence" value="ECO:0000318"/>
    <property type="project" value="GO_Central"/>
</dbReference>
<dbReference type="CDD" id="cd04457">
    <property type="entry name" value="S1_S28E"/>
    <property type="match status" value="1"/>
</dbReference>
<dbReference type="FunFam" id="2.40.50.140:FF:000025">
    <property type="entry name" value="40S ribosomal protein S28"/>
    <property type="match status" value="1"/>
</dbReference>
<dbReference type="Gene3D" id="2.40.50.140">
    <property type="entry name" value="Nucleic acid-binding proteins"/>
    <property type="match status" value="1"/>
</dbReference>
<dbReference type="HAMAP" id="MF_00292">
    <property type="entry name" value="Ribosomal_eS28"/>
    <property type="match status" value="1"/>
</dbReference>
<dbReference type="InterPro" id="IPR012340">
    <property type="entry name" value="NA-bd_OB-fold"/>
</dbReference>
<dbReference type="InterPro" id="IPR000289">
    <property type="entry name" value="Ribosomal_eS28"/>
</dbReference>
<dbReference type="InterPro" id="IPR028626">
    <property type="entry name" value="Ribosomal_eS28_CS"/>
</dbReference>
<dbReference type="PANTHER" id="PTHR10769">
    <property type="entry name" value="40S RIBOSOMAL PROTEIN S28"/>
    <property type="match status" value="1"/>
</dbReference>
<dbReference type="PANTHER" id="PTHR10769:SF3">
    <property type="entry name" value="SMALL RIBOSOMAL SUBUNIT PROTEIN ES28"/>
    <property type="match status" value="1"/>
</dbReference>
<dbReference type="Pfam" id="PF01200">
    <property type="entry name" value="Ribosomal_S28e"/>
    <property type="match status" value="1"/>
</dbReference>
<dbReference type="SUPFAM" id="SSF50249">
    <property type="entry name" value="Nucleic acid-binding proteins"/>
    <property type="match status" value="1"/>
</dbReference>
<dbReference type="PROSITE" id="PS00961">
    <property type="entry name" value="RIBOSOMAL_S28E"/>
    <property type="match status" value="1"/>
</dbReference>
<comment type="similarity">
    <text evidence="1">Belongs to the eukaryotic ribosomal protein eS28 family.</text>
</comment>
<proteinExistence type="evidence at protein level"/>
<feature type="chain" id="PRO_0000136831" description="Small ribosomal subunit protein eS28">
    <location>
        <begin position="1"/>
        <end position="65"/>
    </location>
</feature>
<accession>Q9W334</accession>
<name>RS28_DROME</name>
<gene>
    <name type="primary">RpS28b</name>
    <name type="ORF">CG2998</name>
</gene>
<reference key="1">
    <citation type="journal article" date="2000" name="Science">
        <title>The genome sequence of Drosophila melanogaster.</title>
        <authorList>
            <person name="Adams M.D."/>
            <person name="Celniker S.E."/>
            <person name="Holt R.A."/>
            <person name="Evans C.A."/>
            <person name="Gocayne J.D."/>
            <person name="Amanatides P.G."/>
            <person name="Scherer S.E."/>
            <person name="Li P.W."/>
            <person name="Hoskins R.A."/>
            <person name="Galle R.F."/>
            <person name="George R.A."/>
            <person name="Lewis S.E."/>
            <person name="Richards S."/>
            <person name="Ashburner M."/>
            <person name="Henderson S.N."/>
            <person name="Sutton G.G."/>
            <person name="Wortman J.R."/>
            <person name="Yandell M.D."/>
            <person name="Zhang Q."/>
            <person name="Chen L.X."/>
            <person name="Brandon R.C."/>
            <person name="Rogers Y.-H.C."/>
            <person name="Blazej R.G."/>
            <person name="Champe M."/>
            <person name="Pfeiffer B.D."/>
            <person name="Wan K.H."/>
            <person name="Doyle C."/>
            <person name="Baxter E.G."/>
            <person name="Helt G."/>
            <person name="Nelson C.R."/>
            <person name="Miklos G.L.G."/>
            <person name="Abril J.F."/>
            <person name="Agbayani A."/>
            <person name="An H.-J."/>
            <person name="Andrews-Pfannkoch C."/>
            <person name="Baldwin D."/>
            <person name="Ballew R.M."/>
            <person name="Basu A."/>
            <person name="Baxendale J."/>
            <person name="Bayraktaroglu L."/>
            <person name="Beasley E.M."/>
            <person name="Beeson K.Y."/>
            <person name="Benos P.V."/>
            <person name="Berman B.P."/>
            <person name="Bhandari D."/>
            <person name="Bolshakov S."/>
            <person name="Borkova D."/>
            <person name="Botchan M.R."/>
            <person name="Bouck J."/>
            <person name="Brokstein P."/>
            <person name="Brottier P."/>
            <person name="Burtis K.C."/>
            <person name="Busam D.A."/>
            <person name="Butler H."/>
            <person name="Cadieu E."/>
            <person name="Center A."/>
            <person name="Chandra I."/>
            <person name="Cherry J.M."/>
            <person name="Cawley S."/>
            <person name="Dahlke C."/>
            <person name="Davenport L.B."/>
            <person name="Davies P."/>
            <person name="de Pablos B."/>
            <person name="Delcher A."/>
            <person name="Deng Z."/>
            <person name="Mays A.D."/>
            <person name="Dew I."/>
            <person name="Dietz S.M."/>
            <person name="Dodson K."/>
            <person name="Doup L.E."/>
            <person name="Downes M."/>
            <person name="Dugan-Rocha S."/>
            <person name="Dunkov B.C."/>
            <person name="Dunn P."/>
            <person name="Durbin K.J."/>
            <person name="Evangelista C.C."/>
            <person name="Ferraz C."/>
            <person name="Ferriera S."/>
            <person name="Fleischmann W."/>
            <person name="Fosler C."/>
            <person name="Gabrielian A.E."/>
            <person name="Garg N.S."/>
            <person name="Gelbart W.M."/>
            <person name="Glasser K."/>
            <person name="Glodek A."/>
            <person name="Gong F."/>
            <person name="Gorrell J.H."/>
            <person name="Gu Z."/>
            <person name="Guan P."/>
            <person name="Harris M."/>
            <person name="Harris N.L."/>
            <person name="Harvey D.A."/>
            <person name="Heiman T.J."/>
            <person name="Hernandez J.R."/>
            <person name="Houck J."/>
            <person name="Hostin D."/>
            <person name="Houston K.A."/>
            <person name="Howland T.J."/>
            <person name="Wei M.-H."/>
            <person name="Ibegwam C."/>
            <person name="Jalali M."/>
            <person name="Kalush F."/>
            <person name="Karpen G.H."/>
            <person name="Ke Z."/>
            <person name="Kennison J.A."/>
            <person name="Ketchum K.A."/>
            <person name="Kimmel B.E."/>
            <person name="Kodira C.D."/>
            <person name="Kraft C.L."/>
            <person name="Kravitz S."/>
            <person name="Kulp D."/>
            <person name="Lai Z."/>
            <person name="Lasko P."/>
            <person name="Lei Y."/>
            <person name="Levitsky A.A."/>
            <person name="Li J.H."/>
            <person name="Li Z."/>
            <person name="Liang Y."/>
            <person name="Lin X."/>
            <person name="Liu X."/>
            <person name="Mattei B."/>
            <person name="McIntosh T.C."/>
            <person name="McLeod M.P."/>
            <person name="McPherson D."/>
            <person name="Merkulov G."/>
            <person name="Milshina N.V."/>
            <person name="Mobarry C."/>
            <person name="Morris J."/>
            <person name="Moshrefi A."/>
            <person name="Mount S.M."/>
            <person name="Moy M."/>
            <person name="Murphy B."/>
            <person name="Murphy L."/>
            <person name="Muzny D.M."/>
            <person name="Nelson D.L."/>
            <person name="Nelson D.R."/>
            <person name="Nelson K.A."/>
            <person name="Nixon K."/>
            <person name="Nusskern D.R."/>
            <person name="Pacleb J.M."/>
            <person name="Palazzolo M."/>
            <person name="Pittman G.S."/>
            <person name="Pan S."/>
            <person name="Pollard J."/>
            <person name="Puri V."/>
            <person name="Reese M.G."/>
            <person name="Reinert K."/>
            <person name="Remington K."/>
            <person name="Saunders R.D.C."/>
            <person name="Scheeler F."/>
            <person name="Shen H."/>
            <person name="Shue B.C."/>
            <person name="Siden-Kiamos I."/>
            <person name="Simpson M."/>
            <person name="Skupski M.P."/>
            <person name="Smith T.J."/>
            <person name="Spier E."/>
            <person name="Spradling A.C."/>
            <person name="Stapleton M."/>
            <person name="Strong R."/>
            <person name="Sun E."/>
            <person name="Svirskas R."/>
            <person name="Tector C."/>
            <person name="Turner R."/>
            <person name="Venter E."/>
            <person name="Wang A.H."/>
            <person name="Wang X."/>
            <person name="Wang Z.-Y."/>
            <person name="Wassarman D.A."/>
            <person name="Weinstock G.M."/>
            <person name="Weissenbach J."/>
            <person name="Williams S.M."/>
            <person name="Woodage T."/>
            <person name="Worley K.C."/>
            <person name="Wu D."/>
            <person name="Yang S."/>
            <person name="Yao Q.A."/>
            <person name="Ye J."/>
            <person name="Yeh R.-F."/>
            <person name="Zaveri J.S."/>
            <person name="Zhan M."/>
            <person name="Zhang G."/>
            <person name="Zhao Q."/>
            <person name="Zheng L."/>
            <person name="Zheng X.H."/>
            <person name="Zhong F.N."/>
            <person name="Zhong W."/>
            <person name="Zhou X."/>
            <person name="Zhu S.C."/>
            <person name="Zhu X."/>
            <person name="Smith H.O."/>
            <person name="Gibbs R.A."/>
            <person name="Myers E.W."/>
            <person name="Rubin G.M."/>
            <person name="Venter J.C."/>
        </authorList>
    </citation>
    <scope>NUCLEOTIDE SEQUENCE [LARGE SCALE GENOMIC DNA]</scope>
    <source>
        <strain>Berkeley</strain>
    </source>
</reference>
<reference key="2">
    <citation type="journal article" date="2002" name="Genome Biol.">
        <title>Annotation of the Drosophila melanogaster euchromatic genome: a systematic review.</title>
        <authorList>
            <person name="Misra S."/>
            <person name="Crosby M.A."/>
            <person name="Mungall C.J."/>
            <person name="Matthews B.B."/>
            <person name="Campbell K.S."/>
            <person name="Hradecky P."/>
            <person name="Huang Y."/>
            <person name="Kaminker J.S."/>
            <person name="Millburn G.H."/>
            <person name="Prochnik S.E."/>
            <person name="Smith C.D."/>
            <person name="Tupy J.L."/>
            <person name="Whitfield E.J."/>
            <person name="Bayraktaroglu L."/>
            <person name="Berman B.P."/>
            <person name="Bettencourt B.R."/>
            <person name="Celniker S.E."/>
            <person name="de Grey A.D.N.J."/>
            <person name="Drysdale R.A."/>
            <person name="Harris N.L."/>
            <person name="Richter J."/>
            <person name="Russo S."/>
            <person name="Schroeder A.J."/>
            <person name="Shu S.Q."/>
            <person name="Stapleton M."/>
            <person name="Yamada C."/>
            <person name="Ashburner M."/>
            <person name="Gelbart W.M."/>
            <person name="Rubin G.M."/>
            <person name="Lewis S.E."/>
        </authorList>
    </citation>
    <scope>GENOME REANNOTATION</scope>
    <source>
        <strain>Berkeley</strain>
    </source>
</reference>
<reference key="3">
    <citation type="journal article" date="2002" name="Genome Biol.">
        <title>A Drosophila full-length cDNA resource.</title>
        <authorList>
            <person name="Stapleton M."/>
            <person name="Carlson J.W."/>
            <person name="Brokstein P."/>
            <person name="Yu C."/>
            <person name="Champe M."/>
            <person name="George R.A."/>
            <person name="Guarin H."/>
            <person name="Kronmiller B."/>
            <person name="Pacleb J.M."/>
            <person name="Park S."/>
            <person name="Wan K.H."/>
            <person name="Rubin G.M."/>
            <person name="Celniker S.E."/>
        </authorList>
    </citation>
    <scope>NUCLEOTIDE SEQUENCE [LARGE SCALE MRNA]</scope>
    <source>
        <strain>Berkeley</strain>
        <tissue>Larva</tissue>
        <tissue>Pupae</tissue>
    </source>
</reference>
<reference key="4">
    <citation type="journal article" date="2013" name="Nature">
        <title>Structures of the human and Drosophila 80S ribosome.</title>
        <authorList>
            <person name="Anger A.M."/>
            <person name="Armache J.P."/>
            <person name="Berninghausen O."/>
            <person name="Habeck M."/>
            <person name="Subklewe M."/>
            <person name="Wilson D.N."/>
            <person name="Beckmann R."/>
        </authorList>
    </citation>
    <scope>STRUCTURE BY ELECTRON MICROSCOPY (6.0 ANGSTROMS) OF THE 80S RIBOSOME</scope>
</reference>
<evidence type="ECO:0000305" key="1"/>
<organism>
    <name type="scientific">Drosophila melanogaster</name>
    <name type="common">Fruit fly</name>
    <dbReference type="NCBI Taxonomy" id="7227"/>
    <lineage>
        <taxon>Eukaryota</taxon>
        <taxon>Metazoa</taxon>
        <taxon>Ecdysozoa</taxon>
        <taxon>Arthropoda</taxon>
        <taxon>Hexapoda</taxon>
        <taxon>Insecta</taxon>
        <taxon>Pterygota</taxon>
        <taxon>Neoptera</taxon>
        <taxon>Endopterygota</taxon>
        <taxon>Diptera</taxon>
        <taxon>Brachycera</taxon>
        <taxon>Muscomorpha</taxon>
        <taxon>Ephydroidea</taxon>
        <taxon>Drosophilidae</taxon>
        <taxon>Drosophila</taxon>
        <taxon>Sophophora</taxon>
    </lineage>
</organism>
<protein>
    <recommendedName>
        <fullName evidence="1">Small ribosomal subunit protein eS28</fullName>
    </recommendedName>
    <alternativeName>
        <fullName>40S ribosomal protein S28</fullName>
    </alternativeName>
</protein>
<sequence>MDKPVVWARVMKVLGRTGSQGQCTQVKVEFLGEQNRQIIRNVKGPVREGDILTLLESEREARRLR</sequence>